<keyword id="KW-0131">Cell cycle</keyword>
<keyword id="KW-0132">Cell division</keyword>
<keyword id="KW-0997">Cell inner membrane</keyword>
<keyword id="KW-1003">Cell membrane</keyword>
<keyword id="KW-0133">Cell shape</keyword>
<keyword id="KW-0961">Cell wall biogenesis/degradation</keyword>
<keyword id="KW-0328">Glycosyltransferase</keyword>
<keyword id="KW-0472">Membrane</keyword>
<keyword id="KW-0573">Peptidoglycan synthesis</keyword>
<keyword id="KW-0808">Transferase</keyword>
<keyword id="KW-0812">Transmembrane</keyword>
<keyword id="KW-1133">Transmembrane helix</keyword>
<comment type="function">
    <text evidence="1">Peptidoglycan polymerase that is essential for cell division.</text>
</comment>
<comment type="catalytic activity">
    <reaction evidence="1">
        <text>[GlcNAc-(1-&gt;4)-Mur2Ac(oyl-L-Ala-gamma-D-Glu-L-Lys-D-Ala-D-Ala)](n)-di-trans,octa-cis-undecaprenyl diphosphate + beta-D-GlcNAc-(1-&gt;4)-Mur2Ac(oyl-L-Ala-gamma-D-Glu-L-Lys-D-Ala-D-Ala)-di-trans,octa-cis-undecaprenyl diphosphate = [GlcNAc-(1-&gt;4)-Mur2Ac(oyl-L-Ala-gamma-D-Glu-L-Lys-D-Ala-D-Ala)](n+1)-di-trans,octa-cis-undecaprenyl diphosphate + di-trans,octa-cis-undecaprenyl diphosphate + H(+)</text>
        <dbReference type="Rhea" id="RHEA:23708"/>
        <dbReference type="Rhea" id="RHEA-COMP:9602"/>
        <dbReference type="Rhea" id="RHEA-COMP:9603"/>
        <dbReference type="ChEBI" id="CHEBI:15378"/>
        <dbReference type="ChEBI" id="CHEBI:58405"/>
        <dbReference type="ChEBI" id="CHEBI:60033"/>
        <dbReference type="ChEBI" id="CHEBI:78435"/>
        <dbReference type="EC" id="2.4.99.28"/>
    </reaction>
</comment>
<comment type="pathway">
    <text evidence="1">Cell wall biogenesis; peptidoglycan biosynthesis.</text>
</comment>
<comment type="subcellular location">
    <subcellularLocation>
        <location evidence="1">Cell inner membrane</location>
        <topology evidence="1">Multi-pass membrane protein</topology>
    </subcellularLocation>
    <text evidence="1">Localizes to the division septum.</text>
</comment>
<comment type="similarity">
    <text evidence="1">Belongs to the SEDS family. FtsW subfamily.</text>
</comment>
<sequence>MMTTANAPQANRALKTKDTSQADTKLSALFAARHDEQNLQSPYDIGLIIVALALMTIGIIIVTSASMPVAERIHDNPFYFAIRHGIYIVGAIIAAMVVLELPMQFWRTANPYLLLAAIGLLVAVLLVGRTVNGSTRWLALGPITIQAAEPAKLFFFTYLAGYLVRRYEEVTENLKGFIKPLVVFFALAMLLLLQPDLGTVVVMFATTIGLLFLAGARLWQFFALVFAGVLAVVALIVFEEYRMKRVTSFLDPWADPFGAGYQLTQSLMAYGRGNWFGQGLGNSLQKLEFLPEAHTDFVMAILAEELGFVGVLAVLGLILWMVVRALQIGNKALLKSRPFEGYLAYSVGIWFSFQTAVNIGASAGILPTKGLTLPLVSYGGSSLIVMSVAVALLLRIDFELRVDGVQALGRGDNKRTSKAKAKPSAKSAAKPAVRTKHTNAEPFADAEADYNQAPDLKASDVNAPDMHESSEDAPVAKTKDAGSKKASNTVSPEDEGKAGIKAILARVSKEASSE</sequence>
<reference key="1">
    <citation type="journal article" date="2011" name="J. Bacteriol.">
        <title>Complete genome sequence of the polycyclic aromatic hydrocarbon-degrading bacterium Alteromonas sp. strain SN2.</title>
        <authorList>
            <person name="Jin H.M."/>
            <person name="Jeong H."/>
            <person name="Moon E.J."/>
            <person name="Math R.K."/>
            <person name="Lee K."/>
            <person name="Kim H.J."/>
            <person name="Jeon C.O."/>
            <person name="Oh T.K."/>
            <person name="Kim J.F."/>
        </authorList>
    </citation>
    <scope>NUCLEOTIDE SEQUENCE [LARGE SCALE GENOMIC DNA]</scope>
    <source>
        <strain>JCM 17741 / KACC 18427 / KCTC 11700BP / SN2</strain>
    </source>
</reference>
<name>FTSW_ALTNA</name>
<accession>F5ZBR5</accession>
<dbReference type="EC" id="2.4.99.28" evidence="1"/>
<dbReference type="EMBL" id="CP002339">
    <property type="protein sequence ID" value="AEF01994.1"/>
    <property type="molecule type" value="Genomic_DNA"/>
</dbReference>
<dbReference type="SMR" id="F5ZBR5"/>
<dbReference type="KEGG" id="alt:ambt_02200"/>
<dbReference type="eggNOG" id="COG0772">
    <property type="taxonomic scope" value="Bacteria"/>
</dbReference>
<dbReference type="HOGENOM" id="CLU_029243_1_1_6"/>
<dbReference type="UniPathway" id="UPA00219"/>
<dbReference type="Proteomes" id="UP000000683">
    <property type="component" value="Chromosome"/>
</dbReference>
<dbReference type="GO" id="GO:0032153">
    <property type="term" value="C:cell division site"/>
    <property type="evidence" value="ECO:0007669"/>
    <property type="project" value="UniProtKB-UniRule"/>
</dbReference>
<dbReference type="GO" id="GO:0005886">
    <property type="term" value="C:plasma membrane"/>
    <property type="evidence" value="ECO:0007669"/>
    <property type="project" value="UniProtKB-SubCell"/>
</dbReference>
<dbReference type="GO" id="GO:0015648">
    <property type="term" value="F:lipid-linked peptidoglycan transporter activity"/>
    <property type="evidence" value="ECO:0007669"/>
    <property type="project" value="TreeGrafter"/>
</dbReference>
<dbReference type="GO" id="GO:0008955">
    <property type="term" value="F:peptidoglycan glycosyltransferase activity"/>
    <property type="evidence" value="ECO:0007669"/>
    <property type="project" value="UniProtKB-UniRule"/>
</dbReference>
<dbReference type="GO" id="GO:0071555">
    <property type="term" value="P:cell wall organization"/>
    <property type="evidence" value="ECO:0007669"/>
    <property type="project" value="UniProtKB-KW"/>
</dbReference>
<dbReference type="GO" id="GO:0043093">
    <property type="term" value="P:FtsZ-dependent cytokinesis"/>
    <property type="evidence" value="ECO:0007669"/>
    <property type="project" value="UniProtKB-UniRule"/>
</dbReference>
<dbReference type="GO" id="GO:0009252">
    <property type="term" value="P:peptidoglycan biosynthetic process"/>
    <property type="evidence" value="ECO:0007669"/>
    <property type="project" value="UniProtKB-UniRule"/>
</dbReference>
<dbReference type="GO" id="GO:0008360">
    <property type="term" value="P:regulation of cell shape"/>
    <property type="evidence" value="ECO:0007669"/>
    <property type="project" value="UniProtKB-KW"/>
</dbReference>
<dbReference type="HAMAP" id="MF_00913">
    <property type="entry name" value="PGT_FtsW_proteobact"/>
    <property type="match status" value="1"/>
</dbReference>
<dbReference type="InterPro" id="IPR018365">
    <property type="entry name" value="Cell_cycle_FtsW-rel_CS"/>
</dbReference>
<dbReference type="InterPro" id="IPR013437">
    <property type="entry name" value="FtsW"/>
</dbReference>
<dbReference type="InterPro" id="IPR001182">
    <property type="entry name" value="FtsW/RodA"/>
</dbReference>
<dbReference type="NCBIfam" id="TIGR02614">
    <property type="entry name" value="ftsW"/>
    <property type="match status" value="1"/>
</dbReference>
<dbReference type="NCBIfam" id="NF008042">
    <property type="entry name" value="PRK10774.1"/>
    <property type="match status" value="1"/>
</dbReference>
<dbReference type="PANTHER" id="PTHR30474">
    <property type="entry name" value="CELL CYCLE PROTEIN"/>
    <property type="match status" value="1"/>
</dbReference>
<dbReference type="PANTHER" id="PTHR30474:SF2">
    <property type="entry name" value="PEPTIDOGLYCAN GLYCOSYLTRANSFERASE FTSW-RELATED"/>
    <property type="match status" value="1"/>
</dbReference>
<dbReference type="Pfam" id="PF01098">
    <property type="entry name" value="FTSW_RODA_SPOVE"/>
    <property type="match status" value="1"/>
</dbReference>
<dbReference type="PROSITE" id="PS00428">
    <property type="entry name" value="FTSW_RODA_SPOVE"/>
    <property type="match status" value="1"/>
</dbReference>
<proteinExistence type="inferred from homology"/>
<evidence type="ECO:0000255" key="1">
    <source>
        <dbReference type="HAMAP-Rule" id="MF_00913"/>
    </source>
</evidence>
<evidence type="ECO:0000256" key="2">
    <source>
        <dbReference type="SAM" id="MobiDB-lite"/>
    </source>
</evidence>
<gene>
    <name evidence="1" type="primary">ftsW</name>
    <name type="ordered locus">ambt_02200</name>
</gene>
<protein>
    <recommendedName>
        <fullName evidence="1">Probable peptidoglycan glycosyltransferase FtsW</fullName>
        <shortName evidence="1">PGT</shortName>
        <ecNumber evidence="1">2.4.99.28</ecNumber>
    </recommendedName>
    <alternativeName>
        <fullName evidence="1">Cell division protein FtsW</fullName>
    </alternativeName>
    <alternativeName>
        <fullName evidence="1">Cell wall polymerase</fullName>
    </alternativeName>
    <alternativeName>
        <fullName evidence="1">Peptidoglycan polymerase</fullName>
        <shortName evidence="1">PG polymerase</shortName>
    </alternativeName>
</protein>
<organism>
    <name type="scientific">Alteromonas naphthalenivorans</name>
    <dbReference type="NCBI Taxonomy" id="715451"/>
    <lineage>
        <taxon>Bacteria</taxon>
        <taxon>Pseudomonadati</taxon>
        <taxon>Pseudomonadota</taxon>
        <taxon>Gammaproteobacteria</taxon>
        <taxon>Alteromonadales</taxon>
        <taxon>Alteromonadaceae</taxon>
        <taxon>Alteromonas/Salinimonas group</taxon>
        <taxon>Alteromonas</taxon>
    </lineage>
</organism>
<feature type="chain" id="PRO_0000415174" description="Probable peptidoglycan glycosyltransferase FtsW">
    <location>
        <begin position="1"/>
        <end position="514"/>
    </location>
</feature>
<feature type="transmembrane region" description="Helical" evidence="1">
    <location>
        <begin position="45"/>
        <end position="65"/>
    </location>
</feature>
<feature type="transmembrane region" description="Helical" evidence="1">
    <location>
        <begin position="86"/>
        <end position="106"/>
    </location>
</feature>
<feature type="transmembrane region" description="Helical" evidence="1">
    <location>
        <begin position="108"/>
        <end position="128"/>
    </location>
</feature>
<feature type="transmembrane region" description="Helical" evidence="1">
    <location>
        <begin position="137"/>
        <end position="157"/>
    </location>
</feature>
<feature type="transmembrane region" description="Helical" evidence="1">
    <location>
        <begin position="182"/>
        <end position="202"/>
    </location>
</feature>
<feature type="transmembrane region" description="Helical" evidence="1">
    <location>
        <begin position="218"/>
        <end position="238"/>
    </location>
</feature>
<feature type="transmembrane region" description="Helical" evidence="1">
    <location>
        <begin position="301"/>
        <end position="321"/>
    </location>
</feature>
<feature type="transmembrane region" description="Helical" evidence="1">
    <location>
        <begin position="347"/>
        <end position="367"/>
    </location>
</feature>
<feature type="transmembrane region" description="Helical" evidence="1">
    <location>
        <begin position="373"/>
        <end position="393"/>
    </location>
</feature>
<feature type="region of interest" description="Disordered" evidence="2">
    <location>
        <begin position="411"/>
        <end position="437"/>
    </location>
</feature>
<feature type="region of interest" description="Disordered" evidence="2">
    <location>
        <begin position="449"/>
        <end position="501"/>
    </location>
</feature>